<proteinExistence type="inferred from homology"/>
<feature type="propeptide" id="PRO_0000397530" description="Removed in mature form; by autocatalysis" evidence="1">
    <location>
        <begin position="1"/>
        <end position="64"/>
    </location>
</feature>
<feature type="chain" id="PRO_0000397531" description="Proteasome subunit beta">
    <location>
        <begin position="65"/>
        <end position="303"/>
    </location>
</feature>
<feature type="active site" description="Nucleophile" evidence="1">
    <location>
        <position position="65"/>
    </location>
</feature>
<gene>
    <name evidence="1" type="primary">prcB</name>
    <name type="ordered locus">Mflv_3077</name>
</gene>
<name>PSB_MYCGI</name>
<protein>
    <recommendedName>
        <fullName evidence="1">Proteasome subunit beta</fullName>
        <ecNumber evidence="1">3.4.25.1</ecNumber>
    </recommendedName>
    <alternativeName>
        <fullName evidence="1">20S proteasome beta subunit</fullName>
    </alternativeName>
    <alternativeName>
        <fullName evidence="1">Proteasome core protein PrcB</fullName>
    </alternativeName>
</protein>
<reference key="1">
    <citation type="submission" date="2007-04" db="EMBL/GenBank/DDBJ databases">
        <title>Complete sequence of chromosome of Mycobacterium gilvum PYR-GCK.</title>
        <authorList>
            <consortium name="US DOE Joint Genome Institute"/>
            <person name="Copeland A."/>
            <person name="Lucas S."/>
            <person name="Lapidus A."/>
            <person name="Barry K."/>
            <person name="Detter J.C."/>
            <person name="Glavina del Rio T."/>
            <person name="Hammon N."/>
            <person name="Israni S."/>
            <person name="Dalin E."/>
            <person name="Tice H."/>
            <person name="Pitluck S."/>
            <person name="Chain P."/>
            <person name="Malfatti S."/>
            <person name="Shin M."/>
            <person name="Vergez L."/>
            <person name="Schmutz J."/>
            <person name="Larimer F."/>
            <person name="Land M."/>
            <person name="Hauser L."/>
            <person name="Kyrpides N."/>
            <person name="Mikhailova N."/>
            <person name="Miller C."/>
            <person name="Richardson P."/>
        </authorList>
    </citation>
    <scope>NUCLEOTIDE SEQUENCE [LARGE SCALE GENOMIC DNA]</scope>
    <source>
        <strain>PYR-GCK</strain>
    </source>
</reference>
<accession>A4TB64</accession>
<dbReference type="EC" id="3.4.25.1" evidence="1"/>
<dbReference type="EMBL" id="CP000656">
    <property type="protein sequence ID" value="ABP45554.1"/>
    <property type="molecule type" value="Genomic_DNA"/>
</dbReference>
<dbReference type="SMR" id="A4TB64"/>
<dbReference type="STRING" id="350054.Mflv_3077"/>
<dbReference type="MEROPS" id="T01.005"/>
<dbReference type="KEGG" id="mgi:Mflv_3077"/>
<dbReference type="eggNOG" id="COG0638">
    <property type="taxonomic scope" value="Bacteria"/>
</dbReference>
<dbReference type="HOGENOM" id="CLU_035750_2_0_11"/>
<dbReference type="OrthoDB" id="5174038at2"/>
<dbReference type="UniPathway" id="UPA00997"/>
<dbReference type="GO" id="GO:0005737">
    <property type="term" value="C:cytoplasm"/>
    <property type="evidence" value="ECO:0007669"/>
    <property type="project" value="UniProtKB-SubCell"/>
</dbReference>
<dbReference type="GO" id="GO:0019774">
    <property type="term" value="C:proteasome core complex, beta-subunit complex"/>
    <property type="evidence" value="ECO:0007669"/>
    <property type="project" value="UniProtKB-UniRule"/>
</dbReference>
<dbReference type="GO" id="GO:0004298">
    <property type="term" value="F:threonine-type endopeptidase activity"/>
    <property type="evidence" value="ECO:0007669"/>
    <property type="project" value="UniProtKB-UniRule"/>
</dbReference>
<dbReference type="GO" id="GO:0019941">
    <property type="term" value="P:modification-dependent protein catabolic process"/>
    <property type="evidence" value="ECO:0007669"/>
    <property type="project" value="UniProtKB-UniRule"/>
</dbReference>
<dbReference type="GO" id="GO:0010498">
    <property type="term" value="P:proteasomal protein catabolic process"/>
    <property type="evidence" value="ECO:0007669"/>
    <property type="project" value="UniProtKB-UniRule"/>
</dbReference>
<dbReference type="CDD" id="cd01906">
    <property type="entry name" value="proteasome_protease_HslV"/>
    <property type="match status" value="1"/>
</dbReference>
<dbReference type="FunFam" id="3.60.20.10:FF:000046">
    <property type="entry name" value="Proteasome subunit beta"/>
    <property type="match status" value="1"/>
</dbReference>
<dbReference type="Gene3D" id="3.60.20.10">
    <property type="entry name" value="Glutamine Phosphoribosylpyrophosphate, subunit 1, domain 1"/>
    <property type="match status" value="1"/>
</dbReference>
<dbReference type="HAMAP" id="MF_02113_B">
    <property type="entry name" value="Proteasome_B_B"/>
    <property type="match status" value="1"/>
</dbReference>
<dbReference type="InterPro" id="IPR029055">
    <property type="entry name" value="Ntn_hydrolases_N"/>
</dbReference>
<dbReference type="InterPro" id="IPR001353">
    <property type="entry name" value="Proteasome_sua/b"/>
</dbReference>
<dbReference type="InterPro" id="IPR023333">
    <property type="entry name" value="Proteasome_suB-type"/>
</dbReference>
<dbReference type="InterPro" id="IPR022483">
    <property type="entry name" value="PSB_actinobac"/>
</dbReference>
<dbReference type="NCBIfam" id="TIGR03690">
    <property type="entry name" value="20S_bact_beta"/>
    <property type="match status" value="1"/>
</dbReference>
<dbReference type="PANTHER" id="PTHR32194:SF0">
    <property type="entry name" value="ATP-DEPENDENT PROTEASE SUBUNIT HSLV"/>
    <property type="match status" value="1"/>
</dbReference>
<dbReference type="PANTHER" id="PTHR32194">
    <property type="entry name" value="METALLOPROTEASE TLDD"/>
    <property type="match status" value="1"/>
</dbReference>
<dbReference type="Pfam" id="PF00227">
    <property type="entry name" value="Proteasome"/>
    <property type="match status" value="1"/>
</dbReference>
<dbReference type="SUPFAM" id="SSF56235">
    <property type="entry name" value="N-terminal nucleophile aminohydrolases (Ntn hydrolases)"/>
    <property type="match status" value="1"/>
</dbReference>
<dbReference type="PROSITE" id="PS51476">
    <property type="entry name" value="PROTEASOME_BETA_2"/>
    <property type="match status" value="1"/>
</dbReference>
<organism>
    <name type="scientific">Mycolicibacterium gilvum (strain PYR-GCK)</name>
    <name type="common">Mycobacterium gilvum (strain PYR-GCK)</name>
    <dbReference type="NCBI Taxonomy" id="350054"/>
    <lineage>
        <taxon>Bacteria</taxon>
        <taxon>Bacillati</taxon>
        <taxon>Actinomycetota</taxon>
        <taxon>Actinomycetes</taxon>
        <taxon>Mycobacteriales</taxon>
        <taxon>Mycobacteriaceae</taxon>
        <taxon>Mycolicibacterium</taxon>
    </lineage>
</organism>
<sequence>MTWPDRDTSAFPSALPGAFDASSAMSRGVVNLSSFSDFLRTQAPHLLPVSGSPGVTPSDAVPHGTTIVALKFPGGVVMAGDRRATQGHMIASRDVQKVYITDDYTVTGIAGTAAIAVEFARLYAVELEHYEKLEGVALTFPGKVNRLATMVRGNLGAALQGFVALPLLAGYDLDDPNPEGAGRIVSFDAAGGHNLEEEGYQSVGSGSIFAKSSMKKLYSQVTDADSALRVAIEALYDAADDDSATGGPDLVRGIFPTAVVITADGAVEIAEQQIADMCREIIQNRSRADTFGPDHAPVRGDEL</sequence>
<keyword id="KW-0068">Autocatalytic cleavage</keyword>
<keyword id="KW-0963">Cytoplasm</keyword>
<keyword id="KW-0378">Hydrolase</keyword>
<keyword id="KW-0645">Protease</keyword>
<keyword id="KW-0647">Proteasome</keyword>
<keyword id="KW-0888">Threonine protease</keyword>
<keyword id="KW-0865">Zymogen</keyword>
<evidence type="ECO:0000255" key="1">
    <source>
        <dbReference type="HAMAP-Rule" id="MF_02113"/>
    </source>
</evidence>
<comment type="function">
    <text evidence="1">Component of the proteasome core, a large protease complex with broad specificity involved in protein degradation.</text>
</comment>
<comment type="catalytic activity">
    <reaction evidence="1">
        <text>Cleavage of peptide bonds with very broad specificity.</text>
        <dbReference type="EC" id="3.4.25.1"/>
    </reaction>
</comment>
<comment type="activity regulation">
    <text evidence="1">The formation of the proteasomal ATPase ARC-20S proteasome complex, likely via the docking of the C-termini of ARC into the intersubunit pockets in the alpha-rings, may trigger opening of the gate for substrate entry. Interconversion between the open-gate and close-gate conformations leads to a dynamic regulation of the 20S proteasome proteolysis activity.</text>
</comment>
<comment type="pathway">
    <text evidence="1">Protein degradation; proteasomal Pup-dependent pathway.</text>
</comment>
<comment type="subunit">
    <text evidence="1">The 20S proteasome core is composed of 14 alpha and 14 beta subunits that assemble into four stacked heptameric rings, resulting in a barrel-shaped structure. The two inner rings, each composed of seven catalytic beta subunits, are sandwiched by two outer rings, each composed of seven alpha subunits. The catalytic chamber with the active sites is on the inside of the barrel. Has a gated structure, the ends of the cylinder being occluded by the N-termini of the alpha-subunits. Is capped by the proteasome-associated ATPase, ARC.</text>
</comment>
<comment type="subcellular location">
    <subcellularLocation>
        <location evidence="1">Cytoplasm</location>
    </subcellularLocation>
</comment>
<comment type="similarity">
    <text evidence="1">Belongs to the peptidase T1B family.</text>
</comment>